<evidence type="ECO:0000269" key="1">
    <source>
    </source>
</evidence>
<evidence type="ECO:0000305" key="2"/>
<keyword id="KW-0042">Antenna complex</keyword>
<keyword id="KW-0089">Bile pigment</keyword>
<keyword id="KW-0157">Chromophore</keyword>
<keyword id="KW-0903">Direct protein sequencing</keyword>
<keyword id="KW-0249">Electron transport</keyword>
<keyword id="KW-0472">Membrane</keyword>
<keyword id="KW-0602">Photosynthesis</keyword>
<keyword id="KW-0605">Phycobilisome</keyword>
<keyword id="KW-0793">Thylakoid</keyword>
<keyword id="KW-0813">Transport</keyword>
<organism>
    <name type="scientific">Synechococcus sp. (strain WH8103)</name>
    <dbReference type="NCBI Taxonomy" id="29410"/>
    <lineage>
        <taxon>Bacteria</taxon>
        <taxon>Bacillati</taxon>
        <taxon>Cyanobacteriota</taxon>
        <taxon>Cyanophyceae</taxon>
        <taxon>Synechococcales</taxon>
        <taxon>Synechococcaceae</taxon>
        <taxon>Synechococcus</taxon>
    </lineage>
</organism>
<accession>P11394</accession>
<reference key="1">
    <citation type="journal article" date="1993" name="Plant Mol. Biol.">
        <title>Genes of the R-phycocyanin II locus of marine Synechococcus spp., and comparison of protein-chromophore interactions in phycocyanins differing in bilin composition.</title>
        <authorList>
            <person name="de Lorimier R."/>
            <person name="Wilbanks S.M."/>
            <person name="Glazer A.N."/>
        </authorList>
    </citation>
    <scope>NUCLEOTIDE SEQUENCE [GENOMIC DNA]</scope>
</reference>
<reference key="2">
    <citation type="journal article" date="1987" name="J. Biol. Chem.">
        <title>R-phycocyanin II, a new phycocyanin occurring in marine Synechococcus species. Identification of the terminal energy acceptor bilin in phycocyanins.</title>
        <authorList>
            <person name="Ong L.J."/>
            <person name="Glazer A.N."/>
        </authorList>
    </citation>
    <scope>PROTEIN SEQUENCE OF 2-21 AND 84-86</scope>
    <scope>SUBUNIT</scope>
</reference>
<gene>
    <name type="primary">rpcA</name>
</gene>
<protein>
    <recommendedName>
        <fullName>R-phycocyanin-2 subunit alpha</fullName>
    </recommendedName>
    <alternativeName>
        <fullName>R-phycocyanin II alpha chain</fullName>
    </alternativeName>
</protein>
<proteinExistence type="evidence at protein level"/>
<feature type="initiator methionine" description="Removed" evidence="1">
    <location>
        <position position="1"/>
    </location>
</feature>
<feature type="chain" id="PRO_0000199139" description="R-phycocyanin-2 subunit alpha">
    <location>
        <begin position="2"/>
        <end position="162"/>
    </location>
</feature>
<feature type="binding site" description="covalent">
    <location>
        <position position="84"/>
    </location>
    <ligand>
        <name>(2R,3E)-phycoerythrobilin</name>
        <dbReference type="ChEBI" id="CHEBI:85276"/>
    </ligand>
</feature>
<name>PHRA_SYNPZ</name>
<sequence length="162" mass="17335">MKTPLTEAVAAADSQGRFLSNTEVQAASGRFNRAKASLEAAKALTSKADSLVNGAAQAVYSKFPYTTQMEGSNYSATPEGKAKCSRDVGYYLRMITYCLVAGGTGPMDDYLIAGLDEINRTFELSPSWYVEALKHIKANHGLSGDAATEANSYIDYAINALI</sequence>
<dbReference type="EMBL" id="M95289">
    <property type="protein sequence ID" value="AAA27366.1"/>
    <property type="molecule type" value="Genomic_DNA"/>
</dbReference>
<dbReference type="SMR" id="P11394"/>
<dbReference type="OrthoDB" id="466183at2"/>
<dbReference type="GO" id="GO:0030089">
    <property type="term" value="C:phycobilisome"/>
    <property type="evidence" value="ECO:0007669"/>
    <property type="project" value="UniProtKB-KW"/>
</dbReference>
<dbReference type="GO" id="GO:0031676">
    <property type="term" value="C:plasma membrane-derived thylakoid membrane"/>
    <property type="evidence" value="ECO:0007669"/>
    <property type="project" value="UniProtKB-SubCell"/>
</dbReference>
<dbReference type="GO" id="GO:0015979">
    <property type="term" value="P:photosynthesis"/>
    <property type="evidence" value="ECO:0007669"/>
    <property type="project" value="UniProtKB-KW"/>
</dbReference>
<dbReference type="CDD" id="cd14770">
    <property type="entry name" value="PC-PEC_alpha"/>
    <property type="match status" value="1"/>
</dbReference>
<dbReference type="Gene3D" id="1.10.490.20">
    <property type="entry name" value="Phycocyanins"/>
    <property type="match status" value="1"/>
</dbReference>
<dbReference type="InterPro" id="IPR009050">
    <property type="entry name" value="Globin-like_sf"/>
</dbReference>
<dbReference type="InterPro" id="IPR012128">
    <property type="entry name" value="Phycobilisome_asu/bsu"/>
</dbReference>
<dbReference type="InterPro" id="IPR038719">
    <property type="entry name" value="Phycobilisome_asu/bsu_sf"/>
</dbReference>
<dbReference type="InterPro" id="IPR006246">
    <property type="entry name" value="Phycocyanin_a"/>
</dbReference>
<dbReference type="NCBIfam" id="TIGR01338">
    <property type="entry name" value="phycocy_alpha"/>
    <property type="match status" value="1"/>
</dbReference>
<dbReference type="PANTHER" id="PTHR34011:SF4">
    <property type="entry name" value="C-PHYCOCYANIN ALPHA SUBUNIT"/>
    <property type="match status" value="1"/>
</dbReference>
<dbReference type="PANTHER" id="PTHR34011">
    <property type="entry name" value="PHYCOBILISOME 32.1 KDA LINKER POLYPEPTIDE, PHYCOCYANIN-ASSOCIATED, ROD 2-RELATED"/>
    <property type="match status" value="1"/>
</dbReference>
<dbReference type="Pfam" id="PF00502">
    <property type="entry name" value="Phycobilisome"/>
    <property type="match status" value="1"/>
</dbReference>
<dbReference type="PIRSF" id="PIRSF000081">
    <property type="entry name" value="Phycocyanin"/>
    <property type="match status" value="1"/>
</dbReference>
<dbReference type="SUPFAM" id="SSF46458">
    <property type="entry name" value="Globin-like"/>
    <property type="match status" value="1"/>
</dbReference>
<comment type="function">
    <text>Light-harvesting photosynthetic bile pigment-protein from the phycobiliprotein complex.</text>
</comment>
<comment type="subunit">
    <text evidence="1">Heterodimer of an alpha and a beta chain.</text>
</comment>
<comment type="subcellular location">
    <subcellularLocation>
        <location>Cellular thylakoid membrane</location>
        <topology>Peripheral membrane protein</topology>
        <orientation>Cytoplasmic side</orientation>
    </subcellularLocation>
    <text>Part of the phycobilisome rod.</text>
</comment>
<comment type="PTM">
    <text>Contains one covalently linked bilin chromophore.</text>
</comment>
<comment type="similarity">
    <text evidence="2">Belongs to the phycobiliprotein family.</text>
</comment>